<organism>
    <name type="scientific">Saccharomyces cerevisiae (strain ATCC 204508 / S288c)</name>
    <name type="common">Baker's yeast</name>
    <dbReference type="NCBI Taxonomy" id="559292"/>
    <lineage>
        <taxon>Eukaryota</taxon>
        <taxon>Fungi</taxon>
        <taxon>Dikarya</taxon>
        <taxon>Ascomycota</taxon>
        <taxon>Saccharomycotina</taxon>
        <taxon>Saccharomycetes</taxon>
        <taxon>Saccharomycetales</taxon>
        <taxon>Saccharomycetaceae</taxon>
        <taxon>Saccharomyces</taxon>
    </lineage>
</organism>
<sequence>MKRVTLIVLPRRQFPFLKFHSKEALESAVNLQLIRRKKSVNIQIDSVTFCIYFCLLYFRTLEYHRGTISLHNVTGSKKRDSKANSRSRPSGTITSRGARIGLQGYKSH</sequence>
<accession>P53876</accession>
<accession>I2HB71</accession>
<proteinExistence type="evidence at protein level"/>
<dbReference type="EMBL" id="Z71461">
    <property type="protein sequence ID" value="CAA96079.1"/>
    <property type="molecule type" value="Genomic_DNA"/>
</dbReference>
<dbReference type="EMBL" id="AY693305">
    <property type="protein sequence ID" value="AAT93324.1"/>
    <property type="molecule type" value="Genomic_DNA"/>
</dbReference>
<dbReference type="EMBL" id="BK006947">
    <property type="protein sequence ID" value="DAA35132.1"/>
    <property type="molecule type" value="Genomic_DNA"/>
</dbReference>
<dbReference type="PIR" id="S63139">
    <property type="entry name" value="S63139"/>
</dbReference>
<dbReference type="RefSeq" id="NP_001257687.1">
    <property type="nucleotide sequence ID" value="NM_001270758.1"/>
</dbReference>
<dbReference type="BioGRID" id="300849">
    <property type="interactions" value="6"/>
</dbReference>
<dbReference type="FunCoup" id="P53876">
    <property type="interactions" value="26"/>
</dbReference>
<dbReference type="STRING" id="4932.YNL184C"/>
<dbReference type="GlyGen" id="P53876">
    <property type="glycosylation" value="1 site, 1 O-linked glycan (1 site)"/>
</dbReference>
<dbReference type="PaxDb" id="4932-YNL184C"/>
<dbReference type="EnsemblFungi" id="YNL184C_mRNA">
    <property type="protein sequence ID" value="YNL184C"/>
    <property type="gene ID" value="YNL184C"/>
</dbReference>
<dbReference type="GeneID" id="855537"/>
<dbReference type="KEGG" id="sce:YNL184C"/>
<dbReference type="AGR" id="SGD:S000005128"/>
<dbReference type="SGD" id="S000005128">
    <property type="gene designation" value="YNL184C"/>
</dbReference>
<dbReference type="VEuPathDB" id="FungiDB:YNL184C"/>
<dbReference type="HOGENOM" id="CLU_2198489_0_0_1"/>
<dbReference type="InParanoid" id="P53876"/>
<dbReference type="BioCyc" id="YEAST:G3O-33195-MONOMER"/>
<dbReference type="BioGRID-ORCS" id="855537">
    <property type="hits" value="1 hit in 10 CRISPR screens"/>
</dbReference>
<dbReference type="PRO" id="PR:P53876"/>
<dbReference type="Proteomes" id="UP000002311">
    <property type="component" value="Chromosome XIV"/>
</dbReference>
<dbReference type="RNAct" id="P53876">
    <property type="molecule type" value="protein"/>
</dbReference>
<feature type="chain" id="PRO_0000203404" description="Uncharacterized protein YNL184C">
    <location>
        <begin position="1"/>
        <end position="108"/>
    </location>
</feature>
<feature type="region of interest" description="Disordered" evidence="1">
    <location>
        <begin position="74"/>
        <end position="108"/>
    </location>
</feature>
<feature type="compositionally biased region" description="Polar residues" evidence="1">
    <location>
        <begin position="84"/>
        <end position="95"/>
    </location>
</feature>
<keyword id="KW-1185">Reference proteome</keyword>
<protein>
    <recommendedName>
        <fullName>Uncharacterized protein YNL184C</fullName>
    </recommendedName>
</protein>
<evidence type="ECO:0000256" key="1">
    <source>
        <dbReference type="SAM" id="MobiDB-lite"/>
    </source>
</evidence>
<evidence type="ECO:0000269" key="2">
    <source>
    </source>
</evidence>
<reference key="1">
    <citation type="journal article" date="1997" name="Nature">
        <title>The nucleotide sequence of Saccharomyces cerevisiae chromosome XIV and its evolutionary implications.</title>
        <authorList>
            <person name="Philippsen P."/>
            <person name="Kleine K."/>
            <person name="Poehlmann R."/>
            <person name="Duesterhoeft A."/>
            <person name="Hamberg K."/>
            <person name="Hegemann J.H."/>
            <person name="Obermaier B."/>
            <person name="Urrestarazu L.A."/>
            <person name="Aert R."/>
            <person name="Albermann K."/>
            <person name="Altmann R."/>
            <person name="Andre B."/>
            <person name="Baladron V."/>
            <person name="Ballesta J.P.G."/>
            <person name="Becam A.-M."/>
            <person name="Beinhauer J.D."/>
            <person name="Boskovic J."/>
            <person name="Buitrago M.J."/>
            <person name="Bussereau F."/>
            <person name="Coster F."/>
            <person name="Crouzet M."/>
            <person name="D'Angelo M."/>
            <person name="Dal Pero F."/>
            <person name="De Antoni A."/>
            <person name="del Rey F."/>
            <person name="Doignon F."/>
            <person name="Domdey H."/>
            <person name="Dubois E."/>
            <person name="Fiedler T.A."/>
            <person name="Fleig U."/>
            <person name="Floeth M."/>
            <person name="Fritz C."/>
            <person name="Gaillardin C."/>
            <person name="Garcia-Cantalejo J.M."/>
            <person name="Glansdorff N."/>
            <person name="Goffeau A."/>
            <person name="Gueldener U."/>
            <person name="Herbert C.J."/>
            <person name="Heumann K."/>
            <person name="Heuss-Neitzel D."/>
            <person name="Hilbert H."/>
            <person name="Hinni K."/>
            <person name="Iraqui Houssaini I."/>
            <person name="Jacquet M."/>
            <person name="Jimenez A."/>
            <person name="Jonniaux J.-L."/>
            <person name="Karpfinger-Hartl L."/>
            <person name="Lanfranchi G."/>
            <person name="Lepingle A."/>
            <person name="Levesque H."/>
            <person name="Lyck R."/>
            <person name="Maftahi M."/>
            <person name="Mallet L."/>
            <person name="Maurer C.T.C."/>
            <person name="Messenguy F."/>
            <person name="Mewes H.-W."/>
            <person name="Moestl D."/>
            <person name="Nasr F."/>
            <person name="Nicaud J.-M."/>
            <person name="Niedenthal R.K."/>
            <person name="Pandolfo D."/>
            <person name="Pierard A."/>
            <person name="Piravandi E."/>
            <person name="Planta R.J."/>
            <person name="Pohl T.M."/>
            <person name="Purnelle B."/>
            <person name="Rebischung C."/>
            <person name="Remacha M.A."/>
            <person name="Revuelta J.L."/>
            <person name="Rinke M."/>
            <person name="Saiz J.E."/>
            <person name="Sartorello F."/>
            <person name="Scherens B."/>
            <person name="Sen-Gupta M."/>
            <person name="Soler-Mira A."/>
            <person name="Urbanus J.H.M."/>
            <person name="Valle G."/>
            <person name="Van Dyck L."/>
            <person name="Verhasselt P."/>
            <person name="Vierendeels F."/>
            <person name="Vissers S."/>
            <person name="Voet M."/>
            <person name="Volckaert G."/>
            <person name="Wach A."/>
            <person name="Wambutt R."/>
            <person name="Wedler H."/>
            <person name="Zollner A."/>
            <person name="Hani J."/>
        </authorList>
    </citation>
    <scope>NUCLEOTIDE SEQUENCE [LARGE SCALE GENOMIC DNA]</scope>
    <source>
        <strain>ATCC 204508 / S288c</strain>
    </source>
</reference>
<reference key="2">
    <citation type="journal article" date="2014" name="G3 (Bethesda)">
        <title>The reference genome sequence of Saccharomyces cerevisiae: Then and now.</title>
        <authorList>
            <person name="Engel S.R."/>
            <person name="Dietrich F.S."/>
            <person name="Fisk D.G."/>
            <person name="Binkley G."/>
            <person name="Balakrishnan R."/>
            <person name="Costanzo M.C."/>
            <person name="Dwight S.S."/>
            <person name="Hitz B.C."/>
            <person name="Karra K."/>
            <person name="Nash R.S."/>
            <person name="Weng S."/>
            <person name="Wong E.D."/>
            <person name="Lloyd P."/>
            <person name="Skrzypek M.S."/>
            <person name="Miyasato S.R."/>
            <person name="Simison M."/>
            <person name="Cherry J.M."/>
        </authorList>
    </citation>
    <scope>GENOME REANNOTATION</scope>
    <source>
        <strain>ATCC 204508 / S288c</strain>
    </source>
</reference>
<reference key="3">
    <citation type="journal article" date="2007" name="Genome Res.">
        <title>Approaching a complete repository of sequence-verified protein-encoding clones for Saccharomyces cerevisiae.</title>
        <authorList>
            <person name="Hu Y."/>
            <person name="Rolfs A."/>
            <person name="Bhullar B."/>
            <person name="Murthy T.V.S."/>
            <person name="Zhu C."/>
            <person name="Berger M.F."/>
            <person name="Camargo A.A."/>
            <person name="Kelley F."/>
            <person name="McCarron S."/>
            <person name="Jepson D."/>
            <person name="Richardson A."/>
            <person name="Raphael J."/>
            <person name="Moreira D."/>
            <person name="Taycher E."/>
            <person name="Zuo D."/>
            <person name="Mohr S."/>
            <person name="Kane M.F."/>
            <person name="Williamson J."/>
            <person name="Simpson A.J.G."/>
            <person name="Bulyk M.L."/>
            <person name="Harlow E."/>
            <person name="Marsischky G."/>
            <person name="Kolodner R.D."/>
            <person name="LaBaer J."/>
        </authorList>
    </citation>
    <scope>NUCLEOTIDE SEQUENCE [GENOMIC DNA]</scope>
    <source>
        <strain>ATCC 204508 / S288c</strain>
    </source>
</reference>
<reference key="4">
    <citation type="journal article" date="2003" name="Nature">
        <title>Global analysis of protein expression in yeast.</title>
        <authorList>
            <person name="Ghaemmaghami S."/>
            <person name="Huh W.-K."/>
            <person name="Bower K."/>
            <person name="Howson R.W."/>
            <person name="Belle A."/>
            <person name="Dephoure N."/>
            <person name="O'Shea E.K."/>
            <person name="Weissman J.S."/>
        </authorList>
    </citation>
    <scope>LEVEL OF PROTEIN EXPRESSION [LARGE SCALE ANALYSIS]</scope>
</reference>
<gene>
    <name type="ordered locus">YNL184C</name>
    <name type="ORF">N1627</name>
</gene>
<comment type="miscellaneous">
    <text evidence="2">Present with 623 molecules/cell in log phase SD medium.</text>
</comment>
<name>YNS4_YEAST</name>